<proteinExistence type="inferred from homology"/>
<feature type="chain" id="PRO_0000388233" description="ATPase get3">
    <location>
        <begin position="1"/>
        <end position="340"/>
    </location>
</feature>
<feature type="active site" evidence="1">
    <location>
        <position position="63"/>
    </location>
</feature>
<feature type="binding site" evidence="1">
    <location>
        <begin position="34"/>
        <end position="41"/>
    </location>
    <ligand>
        <name>ATP</name>
        <dbReference type="ChEBI" id="CHEBI:30616"/>
    </ligand>
</feature>
<feature type="binding site" evidence="1">
    <location>
        <position position="245"/>
    </location>
    <ligand>
        <name>ATP</name>
        <dbReference type="ChEBI" id="CHEBI:30616"/>
    </ligand>
</feature>
<feature type="binding site" evidence="1">
    <location>
        <position position="272"/>
    </location>
    <ligand>
        <name>ATP</name>
        <dbReference type="ChEBI" id="CHEBI:30616"/>
    </ligand>
</feature>
<feature type="binding site" evidence="1">
    <location>
        <position position="283"/>
    </location>
    <ligand>
        <name>Zn(2+)</name>
        <dbReference type="ChEBI" id="CHEBI:29105"/>
        <note>ligand shared between dimeric partners</note>
    </ligand>
</feature>
<feature type="binding site" evidence="1">
    <location>
        <position position="286"/>
    </location>
    <ligand>
        <name>Zn(2+)</name>
        <dbReference type="ChEBI" id="CHEBI:29105"/>
        <note>ligand shared between dimeric partners</note>
    </ligand>
</feature>
<accession>B8M4Y9</accession>
<name>GET3_TALSN</name>
<evidence type="ECO:0000255" key="1">
    <source>
        <dbReference type="HAMAP-Rule" id="MF_03112"/>
    </source>
</evidence>
<comment type="function">
    <text evidence="1">ATPase required for the post-translational delivery of tail-anchored (TA) proteins to the endoplasmic reticulum. Recognizes and selectively binds the transmembrane domain of TA proteins in the cytosol. This complex then targets to the endoplasmic reticulum by membrane-bound receptors, where the tail-anchored protein is released for insertion. This process is regulated by ATP binding and hydrolysis. ATP binding drives the homodimer towards the closed dimer state, facilitating recognition of newly synthesized TA membrane proteins. ATP hydrolysis is required for insertion. Subsequently, the homodimer reverts towards the open dimer state, lowering its affinity for the membrane-bound receptor, and returning it to the cytosol to initiate a new round of targeting.</text>
</comment>
<comment type="subunit">
    <text evidence="1">Homodimer.</text>
</comment>
<comment type="subcellular location">
    <subcellularLocation>
        <location evidence="1">Cytoplasm</location>
    </subcellularLocation>
    <subcellularLocation>
        <location evidence="1">Endoplasmic reticulum</location>
    </subcellularLocation>
</comment>
<comment type="similarity">
    <text evidence="1">Belongs to the arsA ATPase family.</text>
</comment>
<keyword id="KW-0067">ATP-binding</keyword>
<keyword id="KW-0963">Cytoplasm</keyword>
<keyword id="KW-0256">Endoplasmic reticulum</keyword>
<keyword id="KW-0378">Hydrolase</keyword>
<keyword id="KW-0479">Metal-binding</keyword>
<keyword id="KW-0547">Nucleotide-binding</keyword>
<keyword id="KW-1185">Reference proteome</keyword>
<keyword id="KW-0813">Transport</keyword>
<keyword id="KW-0862">Zinc</keyword>
<organism>
    <name type="scientific">Talaromyces stipitatus (strain ATCC 10500 / CBS 375.48 / QM 6759 / NRRL 1006)</name>
    <name type="common">Penicillium stipitatum</name>
    <dbReference type="NCBI Taxonomy" id="441959"/>
    <lineage>
        <taxon>Eukaryota</taxon>
        <taxon>Fungi</taxon>
        <taxon>Dikarya</taxon>
        <taxon>Ascomycota</taxon>
        <taxon>Pezizomycotina</taxon>
        <taxon>Eurotiomycetes</taxon>
        <taxon>Eurotiomycetidae</taxon>
        <taxon>Eurotiales</taxon>
        <taxon>Trichocomaceae</taxon>
        <taxon>Talaromyces</taxon>
        <taxon>Talaromyces sect. Talaromyces</taxon>
    </lineage>
</organism>
<gene>
    <name type="primary">get3</name>
    <name type="ORF">TSTA_027210</name>
</gene>
<dbReference type="EC" id="3.6.-.-" evidence="1"/>
<dbReference type="EMBL" id="EQ962654">
    <property type="protein sequence ID" value="EED19424.1"/>
    <property type="molecule type" value="Genomic_DNA"/>
</dbReference>
<dbReference type="RefSeq" id="XP_002479858.1">
    <property type="nucleotide sequence ID" value="XM_002479813.1"/>
</dbReference>
<dbReference type="SMR" id="B8M4Y9"/>
<dbReference type="FunCoup" id="B8M4Y9">
    <property type="interactions" value="981"/>
</dbReference>
<dbReference type="STRING" id="441959.B8M4Y9"/>
<dbReference type="GeneID" id="8109640"/>
<dbReference type="VEuPathDB" id="FungiDB:TSTA_027210"/>
<dbReference type="eggNOG" id="KOG2825">
    <property type="taxonomic scope" value="Eukaryota"/>
</dbReference>
<dbReference type="HOGENOM" id="CLU_040761_0_0_1"/>
<dbReference type="InParanoid" id="B8M4Y9"/>
<dbReference type="OMA" id="MDAPYEF"/>
<dbReference type="OrthoDB" id="1770at2759"/>
<dbReference type="PhylomeDB" id="B8M4Y9"/>
<dbReference type="Proteomes" id="UP000001745">
    <property type="component" value="Unassembled WGS sequence"/>
</dbReference>
<dbReference type="GO" id="GO:0043529">
    <property type="term" value="C:GET complex"/>
    <property type="evidence" value="ECO:0007669"/>
    <property type="project" value="EnsemblFungi"/>
</dbReference>
<dbReference type="GO" id="GO:0005524">
    <property type="term" value="F:ATP binding"/>
    <property type="evidence" value="ECO:0007669"/>
    <property type="project" value="UniProtKB-UniRule"/>
</dbReference>
<dbReference type="GO" id="GO:0016887">
    <property type="term" value="F:ATP hydrolysis activity"/>
    <property type="evidence" value="ECO:0007669"/>
    <property type="project" value="EnsemblFungi"/>
</dbReference>
<dbReference type="GO" id="GO:0005085">
    <property type="term" value="F:guanyl-nucleotide exchange factor activity"/>
    <property type="evidence" value="ECO:0007669"/>
    <property type="project" value="EnsemblFungi"/>
</dbReference>
<dbReference type="GO" id="GO:0042802">
    <property type="term" value="F:identical protein binding"/>
    <property type="evidence" value="ECO:0007669"/>
    <property type="project" value="EnsemblFungi"/>
</dbReference>
<dbReference type="GO" id="GO:0046872">
    <property type="term" value="F:metal ion binding"/>
    <property type="evidence" value="ECO:0007669"/>
    <property type="project" value="UniProtKB-KW"/>
</dbReference>
<dbReference type="GO" id="GO:0044183">
    <property type="term" value="F:protein folding chaperone"/>
    <property type="evidence" value="ECO:0007669"/>
    <property type="project" value="EnsemblFungi"/>
</dbReference>
<dbReference type="GO" id="GO:0051082">
    <property type="term" value="F:unfolded protein binding"/>
    <property type="evidence" value="ECO:0007669"/>
    <property type="project" value="EnsemblFungi"/>
</dbReference>
<dbReference type="GO" id="GO:0034599">
    <property type="term" value="P:cellular response to oxidative stress"/>
    <property type="evidence" value="ECO:0007669"/>
    <property type="project" value="EnsemblFungi"/>
</dbReference>
<dbReference type="GO" id="GO:0000750">
    <property type="term" value="P:pheromone-dependent signal transduction involved in conjugation with cellular fusion"/>
    <property type="evidence" value="ECO:0007669"/>
    <property type="project" value="EnsemblFungi"/>
</dbReference>
<dbReference type="GO" id="GO:0006620">
    <property type="term" value="P:post-translational protein targeting to endoplasmic reticulum membrane"/>
    <property type="evidence" value="ECO:0007669"/>
    <property type="project" value="EnsemblFungi"/>
</dbReference>
<dbReference type="GO" id="GO:0009408">
    <property type="term" value="P:response to heat"/>
    <property type="evidence" value="ECO:0007669"/>
    <property type="project" value="EnsemblFungi"/>
</dbReference>
<dbReference type="GO" id="GO:0010038">
    <property type="term" value="P:response to metal ion"/>
    <property type="evidence" value="ECO:0007669"/>
    <property type="project" value="EnsemblFungi"/>
</dbReference>
<dbReference type="GO" id="GO:0006890">
    <property type="term" value="P:retrograde vesicle-mediated transport, Golgi to endoplasmic reticulum"/>
    <property type="evidence" value="ECO:0007669"/>
    <property type="project" value="EnsemblFungi"/>
</dbReference>
<dbReference type="GO" id="GO:0071816">
    <property type="term" value="P:tail-anchored membrane protein insertion into ER membrane"/>
    <property type="evidence" value="ECO:0007669"/>
    <property type="project" value="EnsemblFungi"/>
</dbReference>
<dbReference type="CDD" id="cd02035">
    <property type="entry name" value="ArsA"/>
    <property type="match status" value="1"/>
</dbReference>
<dbReference type="FunFam" id="3.40.50.300:FF:000235">
    <property type="entry name" value="ATPase ASNA1"/>
    <property type="match status" value="1"/>
</dbReference>
<dbReference type="Gene3D" id="3.40.50.300">
    <property type="entry name" value="P-loop containing nucleotide triphosphate hydrolases"/>
    <property type="match status" value="1"/>
</dbReference>
<dbReference type="HAMAP" id="MF_03112">
    <property type="entry name" value="Asna1_Get3"/>
    <property type="match status" value="1"/>
</dbReference>
<dbReference type="InterPro" id="IPR025723">
    <property type="entry name" value="Anion-transp_ATPase-like_dom"/>
</dbReference>
<dbReference type="InterPro" id="IPR016300">
    <property type="entry name" value="ATPase_ArsA/GET3"/>
</dbReference>
<dbReference type="InterPro" id="IPR027542">
    <property type="entry name" value="ATPase_ArsA/GET3_euk"/>
</dbReference>
<dbReference type="InterPro" id="IPR027417">
    <property type="entry name" value="P-loop_NTPase"/>
</dbReference>
<dbReference type="NCBIfam" id="TIGR00345">
    <property type="entry name" value="GET3_arsA_TRC40"/>
    <property type="match status" value="1"/>
</dbReference>
<dbReference type="PANTHER" id="PTHR10803">
    <property type="entry name" value="ARSENICAL PUMP-DRIVING ATPASE ARSENITE-TRANSLOCATING ATPASE"/>
    <property type="match status" value="1"/>
</dbReference>
<dbReference type="PANTHER" id="PTHR10803:SF3">
    <property type="entry name" value="ATPASE GET3"/>
    <property type="match status" value="1"/>
</dbReference>
<dbReference type="Pfam" id="PF02374">
    <property type="entry name" value="ArsA_ATPase"/>
    <property type="match status" value="1"/>
</dbReference>
<dbReference type="SUPFAM" id="SSF52540">
    <property type="entry name" value="P-loop containing nucleoside triphosphate hydrolases"/>
    <property type="match status" value="1"/>
</dbReference>
<reference key="1">
    <citation type="journal article" date="2015" name="Genome Announc.">
        <title>Genome sequence of the AIDS-associated pathogen Penicillium marneffei (ATCC18224) and its near taxonomic relative Talaromyces stipitatus (ATCC10500).</title>
        <authorList>
            <person name="Nierman W.C."/>
            <person name="Fedorova-Abrams N.D."/>
            <person name="Andrianopoulos A."/>
        </authorList>
    </citation>
    <scope>NUCLEOTIDE SEQUENCE [LARGE SCALE GENOMIC DNA]</scope>
    <source>
        <strain>ATCC 10500 / CBS 375.48 / QM 6759 / NRRL 1006</strain>
    </source>
</reference>
<protein>
    <recommendedName>
        <fullName evidence="1">ATPase get3</fullName>
        <ecNumber evidence="1">3.6.-.-</ecNumber>
    </recommendedName>
    <alternativeName>
        <fullName evidence="1">Arsenical pump-driving ATPase</fullName>
    </alternativeName>
    <alternativeName>
        <fullName evidence="1">Arsenite-stimulated ATPase</fullName>
    </alternativeName>
    <alternativeName>
        <fullName evidence="1">Golgi to ER traffic protein 3</fullName>
    </alternativeName>
    <alternativeName>
        <fullName evidence="1">Guided entry of tail-anchored proteins 3</fullName>
    </alternativeName>
</protein>
<sequence>MSSTALIHDDEALEPTLQSILDQKTLRWIFVGGKGGVGKTTTSCSLAIQLSKVRKSVLLISTDPAHNLSDAFGQKFGKEARLVDGFTNLSAMEIDPNGSIQDLLASGGEAQDDPLAGLGMGGMMQDLAFSIPGVDEAMSFAEVLKQVKSLSYEVIVFDTAPTGHTLRFLQFPTVLEKALAKLSQLSGQFGPMLNSILGSRGGLPGGQNLDDLMSKMESLRETISEVNTQFKNADMTTFVCVCIAEFLSLYETERMIQELTGYSIDTHAIVVNQLLFPKKDNPCEQCNARRKMQKKYLEQIEELYEDFNVVRMPLLVEEVRGKEKLEKFSEMLVKPYVPPE</sequence>